<comment type="function">
    <text evidence="1">Catalyzes the hydrolysis of the adenine ring of phosphoribosyl-AMP.</text>
</comment>
<comment type="catalytic activity">
    <reaction evidence="1">
        <text>1-(5-phospho-beta-D-ribosyl)-5'-AMP + H2O = 1-(5-phospho-beta-D-ribosyl)-5-[(5-phospho-beta-D-ribosylamino)methylideneamino]imidazole-4-carboxamide</text>
        <dbReference type="Rhea" id="RHEA:20049"/>
        <dbReference type="ChEBI" id="CHEBI:15377"/>
        <dbReference type="ChEBI" id="CHEBI:58435"/>
        <dbReference type="ChEBI" id="CHEBI:59457"/>
        <dbReference type="EC" id="3.5.4.19"/>
    </reaction>
</comment>
<comment type="cofactor">
    <cofactor evidence="1">
        <name>Mg(2+)</name>
        <dbReference type="ChEBI" id="CHEBI:18420"/>
    </cofactor>
    <text evidence="1">Binds 1 Mg(2+) ion per subunit.</text>
</comment>
<comment type="cofactor">
    <cofactor evidence="1">
        <name>Zn(2+)</name>
        <dbReference type="ChEBI" id="CHEBI:29105"/>
    </cofactor>
    <text evidence="1">Binds 1 zinc ion per subunit.</text>
</comment>
<comment type="pathway">
    <text evidence="1">Amino-acid biosynthesis; L-histidine biosynthesis; L-histidine from 5-phospho-alpha-D-ribose 1-diphosphate: step 3/9.</text>
</comment>
<comment type="subunit">
    <text evidence="1">Homodimer.</text>
</comment>
<comment type="subcellular location">
    <subcellularLocation>
        <location evidence="1">Cytoplasm</location>
    </subcellularLocation>
</comment>
<comment type="similarity">
    <text evidence="1">Belongs to the PRA-CH family.</text>
</comment>
<organism>
    <name type="scientific">Listeria monocytogenes serotype 4b (strain F2365)</name>
    <dbReference type="NCBI Taxonomy" id="265669"/>
    <lineage>
        <taxon>Bacteria</taxon>
        <taxon>Bacillati</taxon>
        <taxon>Bacillota</taxon>
        <taxon>Bacilli</taxon>
        <taxon>Bacillales</taxon>
        <taxon>Listeriaceae</taxon>
        <taxon>Listeria</taxon>
    </lineage>
</organism>
<gene>
    <name evidence="1" type="primary">hisI</name>
    <name type="ordered locus">LMOf2365_0591</name>
</gene>
<accession>Q722Y8</accession>
<proteinExistence type="inferred from homology"/>
<keyword id="KW-0028">Amino-acid biosynthesis</keyword>
<keyword id="KW-0963">Cytoplasm</keyword>
<keyword id="KW-0368">Histidine biosynthesis</keyword>
<keyword id="KW-0378">Hydrolase</keyword>
<keyword id="KW-0460">Magnesium</keyword>
<keyword id="KW-0479">Metal-binding</keyword>
<keyword id="KW-0862">Zinc</keyword>
<sequence length="105" mass="12034">MTSVDFSKGLVPTIILDDQNGDVLMLAYMNEESYQKTLETGYTWFFSRSRNELWNKGATSGHTQKVKQIWTDCDNDTLLIRVTQIGPACHTGKKSCFFNLIKEDF</sequence>
<reference key="1">
    <citation type="journal article" date="2004" name="Nucleic Acids Res.">
        <title>Whole genome comparisons of serotype 4b and 1/2a strains of the food-borne pathogen Listeria monocytogenes reveal new insights into the core genome components of this species.</title>
        <authorList>
            <person name="Nelson K.E."/>
            <person name="Fouts D.E."/>
            <person name="Mongodin E.F."/>
            <person name="Ravel J."/>
            <person name="DeBoy R.T."/>
            <person name="Kolonay J.F."/>
            <person name="Rasko D.A."/>
            <person name="Angiuoli S.V."/>
            <person name="Gill S.R."/>
            <person name="Paulsen I.T."/>
            <person name="Peterson J.D."/>
            <person name="White O."/>
            <person name="Nelson W.C."/>
            <person name="Nierman W.C."/>
            <person name="Beanan M.J."/>
            <person name="Brinkac L.M."/>
            <person name="Daugherty S.C."/>
            <person name="Dodson R.J."/>
            <person name="Durkin A.S."/>
            <person name="Madupu R."/>
            <person name="Haft D.H."/>
            <person name="Selengut J."/>
            <person name="Van Aken S.E."/>
            <person name="Khouri H.M."/>
            <person name="Fedorova N."/>
            <person name="Forberger H.A."/>
            <person name="Tran B."/>
            <person name="Kathariou S."/>
            <person name="Wonderling L.D."/>
            <person name="Uhlich G.A."/>
            <person name="Bayles D.O."/>
            <person name="Luchansky J.B."/>
            <person name="Fraser C.M."/>
        </authorList>
    </citation>
    <scope>NUCLEOTIDE SEQUENCE [LARGE SCALE GENOMIC DNA]</scope>
    <source>
        <strain>F2365</strain>
    </source>
</reference>
<name>HIS3_LISMF</name>
<dbReference type="EC" id="3.5.4.19" evidence="1"/>
<dbReference type="EMBL" id="AE017262">
    <property type="protein sequence ID" value="AAT03373.1"/>
    <property type="molecule type" value="Genomic_DNA"/>
</dbReference>
<dbReference type="RefSeq" id="WP_003725464.1">
    <property type="nucleotide sequence ID" value="NC_002973.6"/>
</dbReference>
<dbReference type="SMR" id="Q722Y8"/>
<dbReference type="KEGG" id="lmf:LMOf2365_0591"/>
<dbReference type="HOGENOM" id="CLU_048577_5_3_9"/>
<dbReference type="UniPathway" id="UPA00031">
    <property type="reaction ID" value="UER00008"/>
</dbReference>
<dbReference type="GO" id="GO:0005737">
    <property type="term" value="C:cytoplasm"/>
    <property type="evidence" value="ECO:0007669"/>
    <property type="project" value="UniProtKB-SubCell"/>
</dbReference>
<dbReference type="GO" id="GO:0000287">
    <property type="term" value="F:magnesium ion binding"/>
    <property type="evidence" value="ECO:0007669"/>
    <property type="project" value="UniProtKB-UniRule"/>
</dbReference>
<dbReference type="GO" id="GO:0004635">
    <property type="term" value="F:phosphoribosyl-AMP cyclohydrolase activity"/>
    <property type="evidence" value="ECO:0007669"/>
    <property type="project" value="UniProtKB-UniRule"/>
</dbReference>
<dbReference type="GO" id="GO:0008270">
    <property type="term" value="F:zinc ion binding"/>
    <property type="evidence" value="ECO:0007669"/>
    <property type="project" value="UniProtKB-UniRule"/>
</dbReference>
<dbReference type="GO" id="GO:0000105">
    <property type="term" value="P:L-histidine biosynthetic process"/>
    <property type="evidence" value="ECO:0007669"/>
    <property type="project" value="UniProtKB-UniRule"/>
</dbReference>
<dbReference type="FunFam" id="3.10.20.810:FF:000001">
    <property type="entry name" value="Histidine biosynthesis bifunctional protein HisIE"/>
    <property type="match status" value="1"/>
</dbReference>
<dbReference type="Gene3D" id="3.10.20.810">
    <property type="entry name" value="Phosphoribosyl-AMP cyclohydrolase"/>
    <property type="match status" value="1"/>
</dbReference>
<dbReference type="HAMAP" id="MF_01021">
    <property type="entry name" value="HisI"/>
    <property type="match status" value="1"/>
</dbReference>
<dbReference type="InterPro" id="IPR026660">
    <property type="entry name" value="PRA-CH"/>
</dbReference>
<dbReference type="InterPro" id="IPR002496">
    <property type="entry name" value="PRib_AMP_CycHydrolase_dom"/>
</dbReference>
<dbReference type="InterPro" id="IPR038019">
    <property type="entry name" value="PRib_AMP_CycHydrolase_sf"/>
</dbReference>
<dbReference type="NCBIfam" id="NF000768">
    <property type="entry name" value="PRK00051.1"/>
    <property type="match status" value="1"/>
</dbReference>
<dbReference type="PANTHER" id="PTHR42945">
    <property type="entry name" value="HISTIDINE BIOSYNTHESIS BIFUNCTIONAL PROTEIN"/>
    <property type="match status" value="1"/>
</dbReference>
<dbReference type="PANTHER" id="PTHR42945:SF1">
    <property type="entry name" value="HISTIDINE BIOSYNTHESIS BIFUNCTIONAL PROTEIN HIS7"/>
    <property type="match status" value="1"/>
</dbReference>
<dbReference type="Pfam" id="PF01502">
    <property type="entry name" value="PRA-CH"/>
    <property type="match status" value="1"/>
</dbReference>
<dbReference type="SUPFAM" id="SSF141734">
    <property type="entry name" value="HisI-like"/>
    <property type="match status" value="1"/>
</dbReference>
<evidence type="ECO:0000255" key="1">
    <source>
        <dbReference type="HAMAP-Rule" id="MF_01021"/>
    </source>
</evidence>
<protein>
    <recommendedName>
        <fullName evidence="1">Phosphoribosyl-AMP cyclohydrolase</fullName>
        <shortName evidence="1">PRA-CH</shortName>
        <ecNumber evidence="1">3.5.4.19</ecNumber>
    </recommendedName>
</protein>
<feature type="chain" id="PRO_0000136482" description="Phosphoribosyl-AMP cyclohydrolase">
    <location>
        <begin position="1"/>
        <end position="105"/>
    </location>
</feature>
<feature type="binding site" evidence="1">
    <location>
        <position position="72"/>
    </location>
    <ligand>
        <name>Mg(2+)</name>
        <dbReference type="ChEBI" id="CHEBI:18420"/>
    </ligand>
</feature>
<feature type="binding site" evidence="1">
    <location>
        <position position="73"/>
    </location>
    <ligand>
        <name>Zn(2+)</name>
        <dbReference type="ChEBI" id="CHEBI:29105"/>
        <note>ligand shared between dimeric partners</note>
    </ligand>
</feature>
<feature type="binding site" evidence="1">
    <location>
        <position position="74"/>
    </location>
    <ligand>
        <name>Mg(2+)</name>
        <dbReference type="ChEBI" id="CHEBI:18420"/>
    </ligand>
</feature>
<feature type="binding site" evidence="1">
    <location>
        <position position="76"/>
    </location>
    <ligand>
        <name>Mg(2+)</name>
        <dbReference type="ChEBI" id="CHEBI:18420"/>
    </ligand>
</feature>
<feature type="binding site" evidence="1">
    <location>
        <position position="89"/>
    </location>
    <ligand>
        <name>Zn(2+)</name>
        <dbReference type="ChEBI" id="CHEBI:29105"/>
        <note>ligand shared between dimeric partners</note>
    </ligand>
</feature>
<feature type="binding site" evidence="1">
    <location>
        <position position="96"/>
    </location>
    <ligand>
        <name>Zn(2+)</name>
        <dbReference type="ChEBI" id="CHEBI:29105"/>
        <note>ligand shared between dimeric partners</note>
    </ligand>
</feature>